<name>MNMA_DESRM</name>
<comment type="function">
    <text evidence="1">Catalyzes the 2-thiolation of uridine at the wobble position (U34) of tRNA, leading to the formation of s(2)U34.</text>
</comment>
<comment type="catalytic activity">
    <reaction evidence="1">
        <text>S-sulfanyl-L-cysteinyl-[protein] + uridine(34) in tRNA + AH2 + ATP = 2-thiouridine(34) in tRNA + L-cysteinyl-[protein] + A + AMP + diphosphate + H(+)</text>
        <dbReference type="Rhea" id="RHEA:47032"/>
        <dbReference type="Rhea" id="RHEA-COMP:10131"/>
        <dbReference type="Rhea" id="RHEA-COMP:11726"/>
        <dbReference type="Rhea" id="RHEA-COMP:11727"/>
        <dbReference type="Rhea" id="RHEA-COMP:11728"/>
        <dbReference type="ChEBI" id="CHEBI:13193"/>
        <dbReference type="ChEBI" id="CHEBI:15378"/>
        <dbReference type="ChEBI" id="CHEBI:17499"/>
        <dbReference type="ChEBI" id="CHEBI:29950"/>
        <dbReference type="ChEBI" id="CHEBI:30616"/>
        <dbReference type="ChEBI" id="CHEBI:33019"/>
        <dbReference type="ChEBI" id="CHEBI:61963"/>
        <dbReference type="ChEBI" id="CHEBI:65315"/>
        <dbReference type="ChEBI" id="CHEBI:87170"/>
        <dbReference type="ChEBI" id="CHEBI:456215"/>
        <dbReference type="EC" id="2.8.1.13"/>
    </reaction>
</comment>
<comment type="subcellular location">
    <subcellularLocation>
        <location evidence="1">Cytoplasm</location>
    </subcellularLocation>
</comment>
<comment type="similarity">
    <text evidence="1">Belongs to the MnmA/TRMU family.</text>
</comment>
<gene>
    <name evidence="1" type="primary">mnmA</name>
    <name type="synonym">trmU</name>
    <name type="ordered locus">Dred_0766</name>
</gene>
<accession>A4J2K1</accession>
<evidence type="ECO:0000255" key="1">
    <source>
        <dbReference type="HAMAP-Rule" id="MF_00144"/>
    </source>
</evidence>
<keyword id="KW-0067">ATP-binding</keyword>
<keyword id="KW-0963">Cytoplasm</keyword>
<keyword id="KW-1015">Disulfide bond</keyword>
<keyword id="KW-0547">Nucleotide-binding</keyword>
<keyword id="KW-1185">Reference proteome</keyword>
<keyword id="KW-0694">RNA-binding</keyword>
<keyword id="KW-0808">Transferase</keyword>
<keyword id="KW-0819">tRNA processing</keyword>
<keyword id="KW-0820">tRNA-binding</keyword>
<reference key="1">
    <citation type="submission" date="2007-03" db="EMBL/GenBank/DDBJ databases">
        <title>Complete sequence of Desulfotomaculum reducens MI-1.</title>
        <authorList>
            <consortium name="US DOE Joint Genome Institute"/>
            <person name="Copeland A."/>
            <person name="Lucas S."/>
            <person name="Lapidus A."/>
            <person name="Barry K."/>
            <person name="Detter J.C."/>
            <person name="Glavina del Rio T."/>
            <person name="Hammon N."/>
            <person name="Israni S."/>
            <person name="Dalin E."/>
            <person name="Tice H."/>
            <person name="Pitluck S."/>
            <person name="Sims D."/>
            <person name="Brettin T."/>
            <person name="Bruce D."/>
            <person name="Han C."/>
            <person name="Tapia R."/>
            <person name="Schmutz J."/>
            <person name="Larimer F."/>
            <person name="Land M."/>
            <person name="Hauser L."/>
            <person name="Kyrpides N."/>
            <person name="Kim E."/>
            <person name="Tebo B.M."/>
            <person name="Richardson P."/>
        </authorList>
    </citation>
    <scope>NUCLEOTIDE SEQUENCE [LARGE SCALE GENOMIC DNA]</scope>
    <source>
        <strain>ATCC BAA-1160 / DSM 100696 / MI-1</strain>
    </source>
</reference>
<feature type="chain" id="PRO_1000071467" description="tRNA-specific 2-thiouridylase MnmA">
    <location>
        <begin position="1"/>
        <end position="367"/>
    </location>
</feature>
<feature type="region of interest" description="Interaction with tRNA" evidence="1">
    <location>
        <begin position="154"/>
        <end position="156"/>
    </location>
</feature>
<feature type="region of interest" description="Interaction with tRNA" evidence="1">
    <location>
        <begin position="310"/>
        <end position="311"/>
    </location>
</feature>
<feature type="active site" description="Nucleophile" evidence="1">
    <location>
        <position position="106"/>
    </location>
</feature>
<feature type="active site" description="Cysteine persulfide intermediate" evidence="1">
    <location>
        <position position="204"/>
    </location>
</feature>
<feature type="binding site" evidence="1">
    <location>
        <begin position="10"/>
        <end position="17"/>
    </location>
    <ligand>
        <name>ATP</name>
        <dbReference type="ChEBI" id="CHEBI:30616"/>
    </ligand>
</feature>
<feature type="binding site" evidence="1">
    <location>
        <position position="36"/>
    </location>
    <ligand>
        <name>ATP</name>
        <dbReference type="ChEBI" id="CHEBI:30616"/>
    </ligand>
</feature>
<feature type="binding site" evidence="1">
    <location>
        <position position="130"/>
    </location>
    <ligand>
        <name>ATP</name>
        <dbReference type="ChEBI" id="CHEBI:30616"/>
    </ligand>
</feature>
<feature type="site" description="Interaction with tRNA" evidence="1">
    <location>
        <position position="131"/>
    </location>
</feature>
<feature type="site" description="Interaction with tRNA" evidence="1">
    <location>
        <position position="343"/>
    </location>
</feature>
<feature type="disulfide bond" description="Alternate" evidence="1">
    <location>
        <begin position="106"/>
        <end position="204"/>
    </location>
</feature>
<proteinExistence type="inferred from homology"/>
<sequence>MAIQKRVLVAMSGGVDSSVTAALLQQQGYDIVGVTMQIWDPEVTVVGDDYVGCCSLTAVDDARRVANVLGIPYYVLNFRELFTEKVIQYFVDEYFQGRTPNPCIACNRFIKFEALLQRARQMGFDYIATGHYARLGYSEEFQRYTVKKALDDKKDQSYVLYGFTQDQIAHTLMPLADYTKDQVRGIAKEMGLPTYSKPESQEICFVHDNNYRNFLDERSQGGIKPGPFKDLAGNVLGEHKGIPFYTIGQRRGLGLATGERTYVIDIDPDNNVVTVGSEEAIWGTELIASENNFILFENLTGPQELEAQVRYNSKPSPAIIEPYGEGLVKVTFKYPQRAITPGQAVVYYQGDYLVGGGTIEKTIKQKN</sequence>
<organism>
    <name type="scientific">Desulforamulus reducens (strain ATCC BAA-1160 / DSM 100696 / MI-1)</name>
    <name type="common">Desulfotomaculum reducens</name>
    <dbReference type="NCBI Taxonomy" id="349161"/>
    <lineage>
        <taxon>Bacteria</taxon>
        <taxon>Bacillati</taxon>
        <taxon>Bacillota</taxon>
        <taxon>Clostridia</taxon>
        <taxon>Eubacteriales</taxon>
        <taxon>Peptococcaceae</taxon>
        <taxon>Desulforamulus</taxon>
    </lineage>
</organism>
<protein>
    <recommendedName>
        <fullName evidence="1">tRNA-specific 2-thiouridylase MnmA</fullName>
        <ecNumber evidence="1">2.8.1.13</ecNumber>
    </recommendedName>
</protein>
<dbReference type="EC" id="2.8.1.13" evidence="1"/>
<dbReference type="EMBL" id="CP000612">
    <property type="protein sequence ID" value="ABO49304.1"/>
    <property type="molecule type" value="Genomic_DNA"/>
</dbReference>
<dbReference type="RefSeq" id="WP_011877140.1">
    <property type="nucleotide sequence ID" value="NC_009253.1"/>
</dbReference>
<dbReference type="SMR" id="A4J2K1"/>
<dbReference type="STRING" id="349161.Dred_0766"/>
<dbReference type="KEGG" id="drm:Dred_0766"/>
<dbReference type="eggNOG" id="COG0482">
    <property type="taxonomic scope" value="Bacteria"/>
</dbReference>
<dbReference type="HOGENOM" id="CLU_035188_0_0_9"/>
<dbReference type="OrthoDB" id="9800696at2"/>
<dbReference type="Proteomes" id="UP000001556">
    <property type="component" value="Chromosome"/>
</dbReference>
<dbReference type="GO" id="GO:0005737">
    <property type="term" value="C:cytoplasm"/>
    <property type="evidence" value="ECO:0007669"/>
    <property type="project" value="UniProtKB-SubCell"/>
</dbReference>
<dbReference type="GO" id="GO:0005524">
    <property type="term" value="F:ATP binding"/>
    <property type="evidence" value="ECO:0007669"/>
    <property type="project" value="UniProtKB-KW"/>
</dbReference>
<dbReference type="GO" id="GO:0000049">
    <property type="term" value="F:tRNA binding"/>
    <property type="evidence" value="ECO:0007669"/>
    <property type="project" value="UniProtKB-KW"/>
</dbReference>
<dbReference type="GO" id="GO:0103016">
    <property type="term" value="F:tRNA-uridine 2-sulfurtransferase activity"/>
    <property type="evidence" value="ECO:0007669"/>
    <property type="project" value="UniProtKB-EC"/>
</dbReference>
<dbReference type="GO" id="GO:0002143">
    <property type="term" value="P:tRNA wobble position uridine thiolation"/>
    <property type="evidence" value="ECO:0007669"/>
    <property type="project" value="TreeGrafter"/>
</dbReference>
<dbReference type="CDD" id="cd01998">
    <property type="entry name" value="MnmA_TRMU-like"/>
    <property type="match status" value="1"/>
</dbReference>
<dbReference type="FunFam" id="2.30.30.280:FF:000001">
    <property type="entry name" value="tRNA-specific 2-thiouridylase MnmA"/>
    <property type="match status" value="1"/>
</dbReference>
<dbReference type="FunFam" id="2.40.30.10:FF:000023">
    <property type="entry name" value="tRNA-specific 2-thiouridylase MnmA"/>
    <property type="match status" value="1"/>
</dbReference>
<dbReference type="FunFam" id="3.40.50.620:FF:000115">
    <property type="entry name" value="tRNA-specific 2-thiouridylase MnmA"/>
    <property type="match status" value="1"/>
</dbReference>
<dbReference type="Gene3D" id="2.30.30.280">
    <property type="entry name" value="Adenine nucleotide alpha hydrolases-like domains"/>
    <property type="match status" value="1"/>
</dbReference>
<dbReference type="Gene3D" id="3.40.50.620">
    <property type="entry name" value="HUPs"/>
    <property type="match status" value="1"/>
</dbReference>
<dbReference type="Gene3D" id="2.40.30.10">
    <property type="entry name" value="Translation factors"/>
    <property type="match status" value="1"/>
</dbReference>
<dbReference type="HAMAP" id="MF_00144">
    <property type="entry name" value="tRNA_thiouridyl_MnmA"/>
    <property type="match status" value="1"/>
</dbReference>
<dbReference type="InterPro" id="IPR004506">
    <property type="entry name" value="MnmA-like"/>
</dbReference>
<dbReference type="InterPro" id="IPR046885">
    <property type="entry name" value="MnmA-like_C"/>
</dbReference>
<dbReference type="InterPro" id="IPR046884">
    <property type="entry name" value="MnmA-like_central"/>
</dbReference>
<dbReference type="InterPro" id="IPR023382">
    <property type="entry name" value="MnmA-like_central_sf"/>
</dbReference>
<dbReference type="InterPro" id="IPR014729">
    <property type="entry name" value="Rossmann-like_a/b/a_fold"/>
</dbReference>
<dbReference type="NCBIfam" id="NF001138">
    <property type="entry name" value="PRK00143.1"/>
    <property type="match status" value="1"/>
</dbReference>
<dbReference type="NCBIfam" id="TIGR00420">
    <property type="entry name" value="trmU"/>
    <property type="match status" value="1"/>
</dbReference>
<dbReference type="PANTHER" id="PTHR11933:SF5">
    <property type="entry name" value="MITOCHONDRIAL TRNA-SPECIFIC 2-THIOURIDYLASE 1"/>
    <property type="match status" value="1"/>
</dbReference>
<dbReference type="PANTHER" id="PTHR11933">
    <property type="entry name" value="TRNA 5-METHYLAMINOMETHYL-2-THIOURIDYLATE -METHYLTRANSFERASE"/>
    <property type="match status" value="1"/>
</dbReference>
<dbReference type="Pfam" id="PF03054">
    <property type="entry name" value="tRNA_Me_trans"/>
    <property type="match status" value="1"/>
</dbReference>
<dbReference type="Pfam" id="PF20258">
    <property type="entry name" value="tRNA_Me_trans_C"/>
    <property type="match status" value="1"/>
</dbReference>
<dbReference type="Pfam" id="PF20259">
    <property type="entry name" value="tRNA_Me_trans_M"/>
    <property type="match status" value="1"/>
</dbReference>
<dbReference type="SUPFAM" id="SSF52402">
    <property type="entry name" value="Adenine nucleotide alpha hydrolases-like"/>
    <property type="match status" value="1"/>
</dbReference>